<feature type="chain" id="PRO_0000237991" description="Large-conductance mechanosensitive channel">
    <location>
        <begin position="1"/>
        <end position="139"/>
    </location>
</feature>
<feature type="transmembrane region" description="Helical" evidence="1">
    <location>
        <begin position="16"/>
        <end position="36"/>
    </location>
</feature>
<feature type="transmembrane region" description="Helical" evidence="1">
    <location>
        <begin position="79"/>
        <end position="99"/>
    </location>
</feature>
<sequence length="139" mass="15013">MSVVKEFREFIARGNVIDLAVGVIIGAAFNGIVKSLVDQVIMPPIGLLTGGLDFSKLEWVLRPEDPASEAIEKVAIQYGAFVNTVIQFFIVATVVFLLVKLVNEIRRQDAAEPAPAAPPAPTAEETLLTEIRDLLAKKG</sequence>
<evidence type="ECO:0000255" key="1">
    <source>
        <dbReference type="HAMAP-Rule" id="MF_00115"/>
    </source>
</evidence>
<dbReference type="EMBL" id="AE005673">
    <property type="protein sequence ID" value="AAK25547.1"/>
    <property type="molecule type" value="Genomic_DNA"/>
</dbReference>
<dbReference type="PIR" id="G87693">
    <property type="entry name" value="G87693"/>
</dbReference>
<dbReference type="RefSeq" id="NP_422379.1">
    <property type="nucleotide sequence ID" value="NC_002696.2"/>
</dbReference>
<dbReference type="RefSeq" id="WP_010921414.1">
    <property type="nucleotide sequence ID" value="NC_002696.2"/>
</dbReference>
<dbReference type="SMR" id="Q9A2H6"/>
<dbReference type="STRING" id="190650.CC_3585"/>
<dbReference type="EnsemblBacteria" id="AAK25547">
    <property type="protein sequence ID" value="AAK25547"/>
    <property type="gene ID" value="CC_3585"/>
</dbReference>
<dbReference type="KEGG" id="ccr:CC_3585"/>
<dbReference type="PATRIC" id="fig|190650.5.peg.3589"/>
<dbReference type="eggNOG" id="COG1970">
    <property type="taxonomic scope" value="Bacteria"/>
</dbReference>
<dbReference type="HOGENOM" id="CLU_095787_0_0_5"/>
<dbReference type="BioCyc" id="CAULO:CC3585-MONOMER"/>
<dbReference type="Proteomes" id="UP000001816">
    <property type="component" value="Chromosome"/>
</dbReference>
<dbReference type="GO" id="GO:0005886">
    <property type="term" value="C:plasma membrane"/>
    <property type="evidence" value="ECO:0007669"/>
    <property type="project" value="UniProtKB-SubCell"/>
</dbReference>
<dbReference type="GO" id="GO:0008381">
    <property type="term" value="F:mechanosensitive monoatomic ion channel activity"/>
    <property type="evidence" value="ECO:0007669"/>
    <property type="project" value="UniProtKB-UniRule"/>
</dbReference>
<dbReference type="FunFam" id="1.10.1200.120:FF:000001">
    <property type="entry name" value="Large-conductance mechanosensitive channel"/>
    <property type="match status" value="1"/>
</dbReference>
<dbReference type="Gene3D" id="1.10.1200.120">
    <property type="entry name" value="Large-conductance mechanosensitive channel, MscL, domain 1"/>
    <property type="match status" value="1"/>
</dbReference>
<dbReference type="HAMAP" id="MF_00115">
    <property type="entry name" value="MscL"/>
    <property type="match status" value="1"/>
</dbReference>
<dbReference type="InterPro" id="IPR019823">
    <property type="entry name" value="Mechanosensitive_channel_CS"/>
</dbReference>
<dbReference type="InterPro" id="IPR001185">
    <property type="entry name" value="MS_channel"/>
</dbReference>
<dbReference type="InterPro" id="IPR037673">
    <property type="entry name" value="MSC/AndL"/>
</dbReference>
<dbReference type="InterPro" id="IPR036019">
    <property type="entry name" value="MscL_channel"/>
</dbReference>
<dbReference type="NCBIfam" id="TIGR00220">
    <property type="entry name" value="mscL"/>
    <property type="match status" value="1"/>
</dbReference>
<dbReference type="NCBIfam" id="NF001843">
    <property type="entry name" value="PRK00567.1-4"/>
    <property type="match status" value="1"/>
</dbReference>
<dbReference type="PANTHER" id="PTHR30266:SF2">
    <property type="entry name" value="LARGE-CONDUCTANCE MECHANOSENSITIVE CHANNEL"/>
    <property type="match status" value="1"/>
</dbReference>
<dbReference type="PANTHER" id="PTHR30266">
    <property type="entry name" value="MECHANOSENSITIVE CHANNEL MSCL"/>
    <property type="match status" value="1"/>
</dbReference>
<dbReference type="Pfam" id="PF01741">
    <property type="entry name" value="MscL"/>
    <property type="match status" value="1"/>
</dbReference>
<dbReference type="PRINTS" id="PR01264">
    <property type="entry name" value="MECHCHANNEL"/>
</dbReference>
<dbReference type="SUPFAM" id="SSF81330">
    <property type="entry name" value="Gated mechanosensitive channel"/>
    <property type="match status" value="1"/>
</dbReference>
<dbReference type="PROSITE" id="PS01327">
    <property type="entry name" value="MSCL"/>
    <property type="match status" value="1"/>
</dbReference>
<organism>
    <name type="scientific">Caulobacter vibrioides (strain ATCC 19089 / CIP 103742 / CB 15)</name>
    <name type="common">Caulobacter crescentus</name>
    <dbReference type="NCBI Taxonomy" id="190650"/>
    <lineage>
        <taxon>Bacteria</taxon>
        <taxon>Pseudomonadati</taxon>
        <taxon>Pseudomonadota</taxon>
        <taxon>Alphaproteobacteria</taxon>
        <taxon>Caulobacterales</taxon>
        <taxon>Caulobacteraceae</taxon>
        <taxon>Caulobacter</taxon>
    </lineage>
</organism>
<accession>Q9A2H6</accession>
<comment type="function">
    <text evidence="1">Channel that opens in response to stretch forces in the membrane lipid bilayer. May participate in the regulation of osmotic pressure changes within the cell.</text>
</comment>
<comment type="subunit">
    <text evidence="1">Homopentamer.</text>
</comment>
<comment type="subcellular location">
    <subcellularLocation>
        <location evidence="1">Cell inner membrane</location>
        <topology evidence="1">Multi-pass membrane protein</topology>
    </subcellularLocation>
</comment>
<comment type="similarity">
    <text evidence="1">Belongs to the MscL family.</text>
</comment>
<gene>
    <name evidence="1" type="primary">mscL</name>
    <name type="ordered locus">CC_3585</name>
</gene>
<protein>
    <recommendedName>
        <fullName evidence="1">Large-conductance mechanosensitive channel</fullName>
    </recommendedName>
</protein>
<proteinExistence type="inferred from homology"/>
<reference key="1">
    <citation type="journal article" date="2001" name="Proc. Natl. Acad. Sci. U.S.A.">
        <title>Complete genome sequence of Caulobacter crescentus.</title>
        <authorList>
            <person name="Nierman W.C."/>
            <person name="Feldblyum T.V."/>
            <person name="Laub M.T."/>
            <person name="Paulsen I.T."/>
            <person name="Nelson K.E."/>
            <person name="Eisen J.A."/>
            <person name="Heidelberg J.F."/>
            <person name="Alley M.R.K."/>
            <person name="Ohta N."/>
            <person name="Maddock J.R."/>
            <person name="Potocka I."/>
            <person name="Nelson W.C."/>
            <person name="Newton A."/>
            <person name="Stephens C."/>
            <person name="Phadke N.D."/>
            <person name="Ely B."/>
            <person name="DeBoy R.T."/>
            <person name="Dodson R.J."/>
            <person name="Durkin A.S."/>
            <person name="Gwinn M.L."/>
            <person name="Haft D.H."/>
            <person name="Kolonay J.F."/>
            <person name="Smit J."/>
            <person name="Craven M.B."/>
            <person name="Khouri H.M."/>
            <person name="Shetty J."/>
            <person name="Berry K.J."/>
            <person name="Utterback T.R."/>
            <person name="Tran K."/>
            <person name="Wolf A.M."/>
            <person name="Vamathevan J.J."/>
            <person name="Ermolaeva M.D."/>
            <person name="White O."/>
            <person name="Salzberg S.L."/>
            <person name="Venter J.C."/>
            <person name="Shapiro L."/>
            <person name="Fraser C.M."/>
        </authorList>
    </citation>
    <scope>NUCLEOTIDE SEQUENCE [LARGE SCALE GENOMIC DNA]</scope>
    <source>
        <strain>ATCC 19089 / CIP 103742 / CB 15</strain>
    </source>
</reference>
<name>MSCL_CAUVC</name>
<keyword id="KW-0997">Cell inner membrane</keyword>
<keyword id="KW-1003">Cell membrane</keyword>
<keyword id="KW-0407">Ion channel</keyword>
<keyword id="KW-0406">Ion transport</keyword>
<keyword id="KW-0472">Membrane</keyword>
<keyword id="KW-1185">Reference proteome</keyword>
<keyword id="KW-0812">Transmembrane</keyword>
<keyword id="KW-1133">Transmembrane helix</keyword>
<keyword id="KW-0813">Transport</keyword>